<organism>
    <name type="scientific">Alkaliphilus metalliredigens (strain QYMF)</name>
    <dbReference type="NCBI Taxonomy" id="293826"/>
    <lineage>
        <taxon>Bacteria</taxon>
        <taxon>Bacillati</taxon>
        <taxon>Bacillota</taxon>
        <taxon>Clostridia</taxon>
        <taxon>Peptostreptococcales</taxon>
        <taxon>Natronincolaceae</taxon>
        <taxon>Alkaliphilus</taxon>
    </lineage>
</organism>
<accession>A6TRU6</accession>
<name>ACKA_ALKMQ</name>
<comment type="function">
    <text evidence="1">Catalyzes the formation of acetyl phosphate from acetate and ATP. Can also catalyze the reverse reaction.</text>
</comment>
<comment type="catalytic activity">
    <reaction evidence="1">
        <text>acetate + ATP = acetyl phosphate + ADP</text>
        <dbReference type="Rhea" id="RHEA:11352"/>
        <dbReference type="ChEBI" id="CHEBI:22191"/>
        <dbReference type="ChEBI" id="CHEBI:30089"/>
        <dbReference type="ChEBI" id="CHEBI:30616"/>
        <dbReference type="ChEBI" id="CHEBI:456216"/>
        <dbReference type="EC" id="2.7.2.1"/>
    </reaction>
</comment>
<comment type="cofactor">
    <cofactor evidence="1">
        <name>Mg(2+)</name>
        <dbReference type="ChEBI" id="CHEBI:18420"/>
    </cofactor>
    <cofactor evidence="1">
        <name>Mn(2+)</name>
        <dbReference type="ChEBI" id="CHEBI:29035"/>
    </cofactor>
    <text evidence="1">Mg(2+). Can also accept Mn(2+).</text>
</comment>
<comment type="pathway">
    <text evidence="1">Metabolic intermediate biosynthesis; acetyl-CoA biosynthesis; acetyl-CoA from acetate: step 1/2.</text>
</comment>
<comment type="subunit">
    <text evidence="1">Homodimer.</text>
</comment>
<comment type="subcellular location">
    <subcellularLocation>
        <location evidence="1">Cytoplasm</location>
    </subcellularLocation>
</comment>
<comment type="similarity">
    <text evidence="1">Belongs to the acetokinase family.</text>
</comment>
<sequence>MKILVMNCGSSSLKYQLINMENEEVLAIGLAERIGIAGARVKHEASGKEKVTIEQPMENHKTAIKIVLEALIDENYGAIKSMDEIAAVGHRVVHGGERFSSSVVVTDDVKNALEECSDLAPLHNPPNLMGIEACQEILPNVPMVGVFDTAFHQTMPESSYMYALPYELYEKHKIRRYGFHGTSHKYVAMKAAEILERPIEDLKIIACHLGNGASITAVDGGISVDTSMGFTPLEGLVMGTRCGDMDPAIVTFLMEKEKIDHNQVNAIMNKQSGVYGLSGVSSDFRDIEVAVKEGNKRAQLALDVYYKRVKKYIGAYAAEMGGVDAVVFTAGLGENSPETRKSICEGLEFLGIKIDNTKNNVRGKETVVSTDDTPTKVLLIPTNEELAIARETKSLI</sequence>
<keyword id="KW-0067">ATP-binding</keyword>
<keyword id="KW-0963">Cytoplasm</keyword>
<keyword id="KW-0418">Kinase</keyword>
<keyword id="KW-0460">Magnesium</keyword>
<keyword id="KW-0479">Metal-binding</keyword>
<keyword id="KW-0547">Nucleotide-binding</keyword>
<keyword id="KW-1185">Reference proteome</keyword>
<keyword id="KW-0808">Transferase</keyword>
<evidence type="ECO:0000255" key="1">
    <source>
        <dbReference type="HAMAP-Rule" id="MF_00020"/>
    </source>
</evidence>
<dbReference type="EC" id="2.7.2.1" evidence="1"/>
<dbReference type="EMBL" id="CP000724">
    <property type="protein sequence ID" value="ABR48914.1"/>
    <property type="molecule type" value="Genomic_DNA"/>
</dbReference>
<dbReference type="RefSeq" id="WP_012063886.1">
    <property type="nucleotide sequence ID" value="NC_009633.1"/>
</dbReference>
<dbReference type="SMR" id="A6TRU6"/>
<dbReference type="STRING" id="293826.Amet_2763"/>
<dbReference type="KEGG" id="amt:Amet_2763"/>
<dbReference type="eggNOG" id="COG0282">
    <property type="taxonomic scope" value="Bacteria"/>
</dbReference>
<dbReference type="HOGENOM" id="CLU_020352_0_1_9"/>
<dbReference type="OrthoDB" id="9802453at2"/>
<dbReference type="UniPathway" id="UPA00340">
    <property type="reaction ID" value="UER00458"/>
</dbReference>
<dbReference type="Proteomes" id="UP000001572">
    <property type="component" value="Chromosome"/>
</dbReference>
<dbReference type="GO" id="GO:0005737">
    <property type="term" value="C:cytoplasm"/>
    <property type="evidence" value="ECO:0007669"/>
    <property type="project" value="UniProtKB-SubCell"/>
</dbReference>
<dbReference type="GO" id="GO:0008776">
    <property type="term" value="F:acetate kinase activity"/>
    <property type="evidence" value="ECO:0007669"/>
    <property type="project" value="UniProtKB-UniRule"/>
</dbReference>
<dbReference type="GO" id="GO:0005524">
    <property type="term" value="F:ATP binding"/>
    <property type="evidence" value="ECO:0007669"/>
    <property type="project" value="UniProtKB-KW"/>
</dbReference>
<dbReference type="GO" id="GO:0000287">
    <property type="term" value="F:magnesium ion binding"/>
    <property type="evidence" value="ECO:0007669"/>
    <property type="project" value="UniProtKB-UniRule"/>
</dbReference>
<dbReference type="GO" id="GO:0006083">
    <property type="term" value="P:acetate metabolic process"/>
    <property type="evidence" value="ECO:0007669"/>
    <property type="project" value="TreeGrafter"/>
</dbReference>
<dbReference type="GO" id="GO:0006085">
    <property type="term" value="P:acetyl-CoA biosynthetic process"/>
    <property type="evidence" value="ECO:0007669"/>
    <property type="project" value="UniProtKB-UniRule"/>
</dbReference>
<dbReference type="CDD" id="cd24010">
    <property type="entry name" value="ASKHA_NBD_AcK_PK"/>
    <property type="match status" value="1"/>
</dbReference>
<dbReference type="Gene3D" id="3.30.420.40">
    <property type="match status" value="2"/>
</dbReference>
<dbReference type="HAMAP" id="MF_00020">
    <property type="entry name" value="Acetate_kinase"/>
    <property type="match status" value="1"/>
</dbReference>
<dbReference type="InterPro" id="IPR004372">
    <property type="entry name" value="Ac/propionate_kinase"/>
</dbReference>
<dbReference type="InterPro" id="IPR000890">
    <property type="entry name" value="Aliphatic_acid_kin_short-chain"/>
</dbReference>
<dbReference type="InterPro" id="IPR023865">
    <property type="entry name" value="Aliphatic_acid_kinase_CS"/>
</dbReference>
<dbReference type="InterPro" id="IPR043129">
    <property type="entry name" value="ATPase_NBD"/>
</dbReference>
<dbReference type="NCBIfam" id="TIGR00016">
    <property type="entry name" value="ackA"/>
    <property type="match status" value="1"/>
</dbReference>
<dbReference type="PANTHER" id="PTHR21060">
    <property type="entry name" value="ACETATE KINASE"/>
    <property type="match status" value="1"/>
</dbReference>
<dbReference type="PANTHER" id="PTHR21060:SF15">
    <property type="entry name" value="ACETATE KINASE-RELATED"/>
    <property type="match status" value="1"/>
</dbReference>
<dbReference type="Pfam" id="PF00871">
    <property type="entry name" value="Acetate_kinase"/>
    <property type="match status" value="1"/>
</dbReference>
<dbReference type="PIRSF" id="PIRSF000722">
    <property type="entry name" value="Acetate_prop_kin"/>
    <property type="match status" value="1"/>
</dbReference>
<dbReference type="PRINTS" id="PR00471">
    <property type="entry name" value="ACETATEKNASE"/>
</dbReference>
<dbReference type="SUPFAM" id="SSF53067">
    <property type="entry name" value="Actin-like ATPase domain"/>
    <property type="match status" value="2"/>
</dbReference>
<dbReference type="PROSITE" id="PS01075">
    <property type="entry name" value="ACETATE_KINASE_1"/>
    <property type="match status" value="1"/>
</dbReference>
<dbReference type="PROSITE" id="PS01076">
    <property type="entry name" value="ACETATE_KINASE_2"/>
    <property type="match status" value="1"/>
</dbReference>
<gene>
    <name evidence="1" type="primary">ackA</name>
    <name type="ordered locus">Amet_2763</name>
</gene>
<reference key="1">
    <citation type="journal article" date="2016" name="Genome Announc.">
        <title>Complete genome sequence of Alkaliphilus metalliredigens strain QYMF, an alkaliphilic and metal-reducing bacterium isolated from borax-contaminated leachate ponds.</title>
        <authorList>
            <person name="Hwang C."/>
            <person name="Copeland A."/>
            <person name="Lucas S."/>
            <person name="Lapidus A."/>
            <person name="Barry K."/>
            <person name="Detter J.C."/>
            <person name="Glavina Del Rio T."/>
            <person name="Hammon N."/>
            <person name="Israni S."/>
            <person name="Dalin E."/>
            <person name="Tice H."/>
            <person name="Pitluck S."/>
            <person name="Chertkov O."/>
            <person name="Brettin T."/>
            <person name="Bruce D."/>
            <person name="Han C."/>
            <person name="Schmutz J."/>
            <person name="Larimer F."/>
            <person name="Land M.L."/>
            <person name="Hauser L."/>
            <person name="Kyrpides N."/>
            <person name="Mikhailova N."/>
            <person name="Ye Q."/>
            <person name="Zhou J."/>
            <person name="Richardson P."/>
            <person name="Fields M.W."/>
        </authorList>
    </citation>
    <scope>NUCLEOTIDE SEQUENCE [LARGE SCALE GENOMIC DNA]</scope>
    <source>
        <strain>QYMF</strain>
    </source>
</reference>
<feature type="chain" id="PRO_1000057184" description="Acetate kinase">
    <location>
        <begin position="1"/>
        <end position="396"/>
    </location>
</feature>
<feature type="active site" description="Proton donor/acceptor" evidence="1">
    <location>
        <position position="148"/>
    </location>
</feature>
<feature type="binding site" evidence="1">
    <location>
        <position position="7"/>
    </location>
    <ligand>
        <name>Mg(2+)</name>
        <dbReference type="ChEBI" id="CHEBI:18420"/>
    </ligand>
</feature>
<feature type="binding site" evidence="1">
    <location>
        <position position="14"/>
    </location>
    <ligand>
        <name>ATP</name>
        <dbReference type="ChEBI" id="CHEBI:30616"/>
    </ligand>
</feature>
<feature type="binding site" evidence="1">
    <location>
        <position position="91"/>
    </location>
    <ligand>
        <name>substrate</name>
    </ligand>
</feature>
<feature type="binding site" evidence="1">
    <location>
        <begin position="208"/>
        <end position="212"/>
    </location>
    <ligand>
        <name>ATP</name>
        <dbReference type="ChEBI" id="CHEBI:30616"/>
    </ligand>
</feature>
<feature type="binding site" evidence="1">
    <location>
        <begin position="283"/>
        <end position="285"/>
    </location>
    <ligand>
        <name>ATP</name>
        <dbReference type="ChEBI" id="CHEBI:30616"/>
    </ligand>
</feature>
<feature type="binding site" evidence="1">
    <location>
        <begin position="331"/>
        <end position="335"/>
    </location>
    <ligand>
        <name>ATP</name>
        <dbReference type="ChEBI" id="CHEBI:30616"/>
    </ligand>
</feature>
<feature type="binding site" evidence="1">
    <location>
        <position position="384"/>
    </location>
    <ligand>
        <name>Mg(2+)</name>
        <dbReference type="ChEBI" id="CHEBI:18420"/>
    </ligand>
</feature>
<feature type="site" description="Transition state stabilizer" evidence="1">
    <location>
        <position position="180"/>
    </location>
</feature>
<feature type="site" description="Transition state stabilizer" evidence="1">
    <location>
        <position position="241"/>
    </location>
</feature>
<proteinExistence type="inferred from homology"/>
<protein>
    <recommendedName>
        <fullName evidence="1">Acetate kinase</fullName>
        <ecNumber evidence="1">2.7.2.1</ecNumber>
    </recommendedName>
    <alternativeName>
        <fullName evidence="1">Acetokinase</fullName>
    </alternativeName>
</protein>